<sequence>MNKLFFVVFLCLIISVLAIGPADLGCTDMPQAEFDEKNANCEKCGNEEGFGEEMVSRCRDKCFTDNFYQSCVDLLNKVYEEKDVPVPPEE</sequence>
<comment type="function">
    <text evidence="1">May increase the toxicity of alpha-latrotoxin and/or other venom components. Is non-toxic to mice and to the cockroach Periplaneta americana.</text>
</comment>
<comment type="subcellular location">
    <subcellularLocation>
        <location evidence="1">Secreted</location>
    </subcellularLocation>
</comment>
<comment type="tissue specificity">
    <text evidence="4">Expressed by the venom gland.</text>
</comment>
<comment type="miscellaneous">
    <text evidence="1">Co-purifies with alpha-latrotoxin.</text>
</comment>
<comment type="similarity">
    <text>Belongs to the arthropod CHH/MIH/GIH/VIH hormone family.</text>
</comment>
<reference key="1">
    <citation type="journal article" date="2014" name="Gene">
        <title>Recruitment and diversification of an ecdysozoan family of neuropeptide hormones for black widow spider venom expression.</title>
        <authorList>
            <person name="McCowan C."/>
            <person name="Garb J.E."/>
        </authorList>
    </citation>
    <scope>NUCLEOTIDE SEQUENCE [MRNA]</scope>
    <source>
        <tissue>Venom gland</tissue>
    </source>
</reference>
<proteinExistence type="inferred from homology"/>
<keyword id="KW-0964">Secreted</keyword>
<keyword id="KW-0732">Signal</keyword>
<feature type="signal peptide" evidence="1">
    <location>
        <begin position="1"/>
        <end position="18"/>
    </location>
</feature>
<feature type="chain" id="PRO_0000432879" description="Alpha-latrotoxin associated low molecular weight protein">
    <location>
        <begin position="19"/>
        <end position="90"/>
    </location>
</feature>
<feature type="sequence conflict" description="In Ref. 1; AHC13259." evidence="3" ref="1">
    <original>L</original>
    <variation>F</variation>
    <location>
        <position position="17"/>
    </location>
</feature>
<name>TXA1_LATGE</name>
<evidence type="ECO:0000250" key="1">
    <source>
        <dbReference type="UniProtKB" id="P49125"/>
    </source>
</evidence>
<evidence type="ECO:0000303" key="2">
    <source>
    </source>
</evidence>
<evidence type="ECO:0000305" key="3"/>
<evidence type="ECO:0000305" key="4">
    <source>
    </source>
</evidence>
<organism>
    <name type="scientific">Latrodectus geometricus</name>
    <name type="common">Brown widow spider</name>
    <dbReference type="NCBI Taxonomy" id="156851"/>
    <lineage>
        <taxon>Eukaryota</taxon>
        <taxon>Metazoa</taxon>
        <taxon>Ecdysozoa</taxon>
        <taxon>Arthropoda</taxon>
        <taxon>Chelicerata</taxon>
        <taxon>Arachnida</taxon>
        <taxon>Araneae</taxon>
        <taxon>Araneomorphae</taxon>
        <taxon>Entelegynae</taxon>
        <taxon>Araneoidea</taxon>
        <taxon>Theridiidae</taxon>
        <taxon>Latrodectus</taxon>
    </lineage>
</organism>
<accession>V9QF69</accession>
<accession>V9QEJ1</accession>
<protein>
    <recommendedName>
        <fullName evidence="2">Alpha-latrotoxin associated low molecular weight protein</fullName>
        <shortName evidence="2">Alpha-latrotoxin-associated LMWP</shortName>
    </recommendedName>
    <alternativeName>
        <fullName evidence="2">Latrodectin-1</fullName>
        <shortName evidence="2">Latrodectin</shortName>
    </alternativeName>
</protein>
<dbReference type="EMBL" id="KF751512">
    <property type="protein sequence ID" value="AHC13257.1"/>
    <property type="molecule type" value="mRNA"/>
</dbReference>
<dbReference type="EMBL" id="KF751513">
    <property type="protein sequence ID" value="AHC13258.1"/>
    <property type="molecule type" value="mRNA"/>
</dbReference>
<dbReference type="EMBL" id="KF751514">
    <property type="protein sequence ID" value="AHC13259.1"/>
    <property type="molecule type" value="mRNA"/>
</dbReference>
<dbReference type="SMR" id="V9QF69"/>
<dbReference type="GO" id="GO:0005576">
    <property type="term" value="C:extracellular region"/>
    <property type="evidence" value="ECO:0007669"/>
    <property type="project" value="UniProtKB-SubCell"/>
</dbReference>
<dbReference type="Gene3D" id="1.10.2010.10">
    <property type="entry name" value="Crustacean CHH/MIH/GIH neurohormone"/>
    <property type="match status" value="1"/>
</dbReference>
<dbReference type="InterPro" id="IPR035957">
    <property type="entry name" value="Crust_neurohorm_sf"/>
</dbReference>
<dbReference type="SUPFAM" id="SSF81778">
    <property type="entry name" value="Crustacean CHH/MIH/GIH neurohormone"/>
    <property type="match status" value="1"/>
</dbReference>